<accession>Q9J5C0</accession>
<dbReference type="EC" id="2.7.7.6"/>
<dbReference type="EMBL" id="AF198100">
    <property type="protein sequence ID" value="AAF44444.1"/>
    <property type="molecule type" value="Genomic_DNA"/>
</dbReference>
<dbReference type="RefSeq" id="NP_039063.1">
    <property type="nucleotide sequence ID" value="NC_002188.1"/>
</dbReference>
<dbReference type="SMR" id="Q9J5C0"/>
<dbReference type="GeneID" id="1486648"/>
<dbReference type="KEGG" id="vg:1486648"/>
<dbReference type="Proteomes" id="UP000008597">
    <property type="component" value="Segment"/>
</dbReference>
<dbReference type="GO" id="GO:0000428">
    <property type="term" value="C:DNA-directed RNA polymerase complex"/>
    <property type="evidence" value="ECO:0007669"/>
    <property type="project" value="UniProtKB-KW"/>
</dbReference>
<dbReference type="GO" id="GO:0003677">
    <property type="term" value="F:DNA binding"/>
    <property type="evidence" value="ECO:0007669"/>
    <property type="project" value="InterPro"/>
</dbReference>
<dbReference type="GO" id="GO:0003899">
    <property type="term" value="F:DNA-directed RNA polymerase activity"/>
    <property type="evidence" value="ECO:0007669"/>
    <property type="project" value="UniProtKB-EC"/>
</dbReference>
<dbReference type="GO" id="GO:0008270">
    <property type="term" value="F:zinc ion binding"/>
    <property type="evidence" value="ECO:0007669"/>
    <property type="project" value="UniProtKB-KW"/>
</dbReference>
<dbReference type="GO" id="GO:0006351">
    <property type="term" value="P:DNA-templated transcription"/>
    <property type="evidence" value="ECO:0007669"/>
    <property type="project" value="InterPro"/>
</dbReference>
<dbReference type="Gene3D" id="2.20.25.10">
    <property type="match status" value="1"/>
</dbReference>
<dbReference type="InterPro" id="IPR009162">
    <property type="entry name" value="RNA_pol_30_chordopoxvir-type"/>
</dbReference>
<dbReference type="InterPro" id="IPR024394">
    <property type="entry name" value="RNA_pol_30_chordopoxvir-type_N"/>
</dbReference>
<dbReference type="InterPro" id="IPR001222">
    <property type="entry name" value="Znf_TFIIS"/>
</dbReference>
<dbReference type="Pfam" id="PF12410">
    <property type="entry name" value="rpo30_N"/>
    <property type="match status" value="1"/>
</dbReference>
<dbReference type="Pfam" id="PF01096">
    <property type="entry name" value="Zn_ribbon_TFIIS"/>
    <property type="match status" value="1"/>
</dbReference>
<dbReference type="PIRSF" id="PIRSF000745">
    <property type="entry name" value="VAC_RPO30"/>
    <property type="match status" value="1"/>
</dbReference>
<dbReference type="SMART" id="SM00440">
    <property type="entry name" value="ZnF_C2C2"/>
    <property type="match status" value="1"/>
</dbReference>
<dbReference type="SUPFAM" id="SSF57783">
    <property type="entry name" value="Zinc beta-ribbon"/>
    <property type="match status" value="1"/>
</dbReference>
<dbReference type="PROSITE" id="PS00466">
    <property type="entry name" value="ZF_TFIIS_1"/>
    <property type="match status" value="1"/>
</dbReference>
<dbReference type="PROSITE" id="PS51133">
    <property type="entry name" value="ZF_TFIIS_2"/>
    <property type="match status" value="1"/>
</dbReference>
<organism>
    <name type="scientific">Fowlpox virus (strain NVSL)</name>
    <name type="common">FPV</name>
    <dbReference type="NCBI Taxonomy" id="928301"/>
    <lineage>
        <taxon>Viruses</taxon>
        <taxon>Varidnaviria</taxon>
        <taxon>Bamfordvirae</taxon>
        <taxon>Nucleocytoviricota</taxon>
        <taxon>Pokkesviricetes</taxon>
        <taxon>Chitovirales</taxon>
        <taxon>Poxviridae</taxon>
        <taxon>Chordopoxvirinae</taxon>
        <taxon>Avipoxvirus</taxon>
        <taxon>Fowlpox virus</taxon>
    </lineage>
</organism>
<keyword id="KW-0240">DNA-directed RNA polymerase</keyword>
<keyword id="KW-0479">Metal-binding</keyword>
<keyword id="KW-0548">Nucleotidyltransferase</keyword>
<keyword id="KW-1185">Reference proteome</keyword>
<keyword id="KW-0804">Transcription</keyword>
<keyword id="KW-0808">Transferase</keyword>
<keyword id="KW-0862">Zinc</keyword>
<keyword id="KW-0863">Zinc-finger</keyword>
<evidence type="ECO:0000250" key="1"/>
<evidence type="ECO:0000255" key="2">
    <source>
        <dbReference type="PROSITE-ProRule" id="PRU00472"/>
    </source>
</evidence>
<evidence type="ECO:0000305" key="3"/>
<proteinExistence type="inferred from homology"/>
<feature type="chain" id="PRO_0000121459" description="DNA-directed RNA polymerase 30 kDa polypeptide">
    <location>
        <begin position="1"/>
        <end position="182"/>
    </location>
</feature>
<feature type="zinc finger region" description="TFIIS-type" evidence="2">
    <location>
        <begin position="135"/>
        <end position="175"/>
    </location>
</feature>
<feature type="binding site" evidence="2">
    <location>
        <position position="139"/>
    </location>
    <ligand>
        <name>Zn(2+)</name>
        <dbReference type="ChEBI" id="CHEBI:29105"/>
    </ligand>
</feature>
<feature type="binding site" evidence="2">
    <location>
        <position position="142"/>
    </location>
    <ligand>
        <name>Zn(2+)</name>
        <dbReference type="ChEBI" id="CHEBI:29105"/>
    </ligand>
</feature>
<feature type="binding site" evidence="2">
    <location>
        <position position="167"/>
    </location>
    <ligand>
        <name>Zn(2+)</name>
        <dbReference type="ChEBI" id="CHEBI:29105"/>
    </ligand>
</feature>
<feature type="binding site" evidence="2">
    <location>
        <position position="170"/>
    </location>
    <ligand>
        <name>Zn(2+)</name>
        <dbReference type="ChEBI" id="CHEBI:29105"/>
    </ligand>
</feature>
<sequence>MDMMKIIKKYINSEEEAQKLLKWAIDNANIYYLRNIVNTKVNIEETKFKTVHNIGIEYSKDNKYKLSYRNKPSIATNEKYKELCNLIRSTNGIEKETLRYLLFGIKCVHAKVEYDIEKVPDYDYSNYFDVLKEKSTIRCVACKSNNTIPMILQTRSSDEEPTVRVVCKDCGKNFAPPRLKFN</sequence>
<protein>
    <recommendedName>
        <fullName>DNA-directed RNA polymerase 30 kDa polypeptide</fullName>
        <ecNumber>2.7.7.6</ecNumber>
    </recommendedName>
</protein>
<comment type="function">
    <text evidence="1">DNA-dependent RNA polymerase catalyzes the transcription of DNA into RNA using the four ribonucleoside triphosphates as substrates. Rpo30 may have a role in RNA chain elongation (By similarity).</text>
</comment>
<comment type="catalytic activity">
    <reaction>
        <text>RNA(n) + a ribonucleoside 5'-triphosphate = RNA(n+1) + diphosphate</text>
        <dbReference type="Rhea" id="RHEA:21248"/>
        <dbReference type="Rhea" id="RHEA-COMP:14527"/>
        <dbReference type="Rhea" id="RHEA-COMP:17342"/>
        <dbReference type="ChEBI" id="CHEBI:33019"/>
        <dbReference type="ChEBI" id="CHEBI:61557"/>
        <dbReference type="ChEBI" id="CHEBI:140395"/>
        <dbReference type="EC" id="2.7.7.6"/>
    </reaction>
</comment>
<comment type="subunit">
    <text>This enzyme consists of at least eight subunits.</text>
</comment>
<comment type="similarity">
    <text evidence="3">Belongs to the poxviridae DNA-directed RNA polymerase 30 kDa subunit family.</text>
</comment>
<name>RPO5_FOWPN</name>
<gene>
    <name type="primary">RPO30</name>
    <name type="ordered locus">FPV100</name>
</gene>
<organismHost>
    <name type="scientific">Vertebrata</name>
    <dbReference type="NCBI Taxonomy" id="7742"/>
</organismHost>
<reference key="1">
    <citation type="journal article" date="2000" name="J. Virol.">
        <title>The genome of fowlpox virus.</title>
        <authorList>
            <person name="Afonso C.L."/>
            <person name="Tulman E.R."/>
            <person name="Lu Z."/>
            <person name="Zsak L."/>
            <person name="Kutish G.F."/>
            <person name="Rock D.L."/>
        </authorList>
    </citation>
    <scope>NUCLEOTIDE SEQUENCE [LARGE SCALE GENOMIC DNA]</scope>
</reference>